<evidence type="ECO:0000255" key="1">
    <source>
        <dbReference type="HAMAP-Rule" id="MF_00294"/>
    </source>
</evidence>
<evidence type="ECO:0000305" key="2"/>
<reference key="1">
    <citation type="journal article" date="2005" name="Genome Res.">
        <title>Genome sequence of Blochmannia pennsylvanicus indicates parallel evolutionary trends among bacterial mutualists of insects.</title>
        <authorList>
            <person name="Degnan P.H."/>
            <person name="Lazarus A.B."/>
            <person name="Wernegreen J.J."/>
        </authorList>
    </citation>
    <scope>NUCLEOTIDE SEQUENCE [LARGE SCALE GENOMIC DNA]</scope>
    <source>
        <strain>BPEN</strain>
    </source>
</reference>
<proteinExistence type="inferred from homology"/>
<sequence length="55" mass="6514">MAKEKRETIRLFSSSKNGHFYSTTKNKRTSSEKMTLKKFDPFARKHVIYIESKNS</sequence>
<name>RL33_BLOPB</name>
<keyword id="KW-1185">Reference proteome</keyword>
<keyword id="KW-0687">Ribonucleoprotein</keyword>
<keyword id="KW-0689">Ribosomal protein</keyword>
<dbReference type="EMBL" id="CP000016">
    <property type="protein sequence ID" value="AAZ41233.1"/>
    <property type="molecule type" value="Genomic_DNA"/>
</dbReference>
<dbReference type="RefSeq" id="WP_011283144.1">
    <property type="nucleotide sequence ID" value="NC_007292.1"/>
</dbReference>
<dbReference type="SMR" id="Q491X1"/>
<dbReference type="STRING" id="291272.BPEN_635"/>
<dbReference type="KEGG" id="bpn:BPEN_635"/>
<dbReference type="eggNOG" id="COG0267">
    <property type="taxonomic scope" value="Bacteria"/>
</dbReference>
<dbReference type="HOGENOM" id="CLU_190949_1_1_6"/>
<dbReference type="OrthoDB" id="21586at2"/>
<dbReference type="Proteomes" id="UP000007794">
    <property type="component" value="Chromosome"/>
</dbReference>
<dbReference type="GO" id="GO:0022625">
    <property type="term" value="C:cytosolic large ribosomal subunit"/>
    <property type="evidence" value="ECO:0007669"/>
    <property type="project" value="TreeGrafter"/>
</dbReference>
<dbReference type="GO" id="GO:0003735">
    <property type="term" value="F:structural constituent of ribosome"/>
    <property type="evidence" value="ECO:0007669"/>
    <property type="project" value="InterPro"/>
</dbReference>
<dbReference type="GO" id="GO:0006412">
    <property type="term" value="P:translation"/>
    <property type="evidence" value="ECO:0007669"/>
    <property type="project" value="UniProtKB-UniRule"/>
</dbReference>
<dbReference type="Gene3D" id="2.20.28.120">
    <property type="entry name" value="Ribosomal protein L33"/>
    <property type="match status" value="1"/>
</dbReference>
<dbReference type="HAMAP" id="MF_00294">
    <property type="entry name" value="Ribosomal_bL33"/>
    <property type="match status" value="1"/>
</dbReference>
<dbReference type="InterPro" id="IPR001705">
    <property type="entry name" value="Ribosomal_bL33"/>
</dbReference>
<dbReference type="InterPro" id="IPR018264">
    <property type="entry name" value="Ribosomal_bL33_CS"/>
</dbReference>
<dbReference type="InterPro" id="IPR038584">
    <property type="entry name" value="Ribosomal_bL33_sf"/>
</dbReference>
<dbReference type="InterPro" id="IPR011332">
    <property type="entry name" value="Ribosomal_zn-bd"/>
</dbReference>
<dbReference type="NCBIfam" id="NF001860">
    <property type="entry name" value="PRK00595.1"/>
    <property type="match status" value="1"/>
</dbReference>
<dbReference type="NCBIfam" id="TIGR01023">
    <property type="entry name" value="rpmG_bact"/>
    <property type="match status" value="1"/>
</dbReference>
<dbReference type="PANTHER" id="PTHR15238">
    <property type="entry name" value="54S RIBOSOMAL PROTEIN L39, MITOCHONDRIAL"/>
    <property type="match status" value="1"/>
</dbReference>
<dbReference type="PANTHER" id="PTHR15238:SF1">
    <property type="entry name" value="LARGE RIBOSOMAL SUBUNIT PROTEIN BL33M"/>
    <property type="match status" value="1"/>
</dbReference>
<dbReference type="Pfam" id="PF00471">
    <property type="entry name" value="Ribosomal_L33"/>
    <property type="match status" value="1"/>
</dbReference>
<dbReference type="SUPFAM" id="SSF57829">
    <property type="entry name" value="Zn-binding ribosomal proteins"/>
    <property type="match status" value="1"/>
</dbReference>
<dbReference type="PROSITE" id="PS00582">
    <property type="entry name" value="RIBOSOMAL_L33"/>
    <property type="match status" value="1"/>
</dbReference>
<accession>Q491X1</accession>
<gene>
    <name evidence="1" type="primary">rpmG</name>
    <name type="ordered locus">BPEN_635</name>
</gene>
<organism>
    <name type="scientific">Blochmanniella pennsylvanica (strain BPEN)</name>
    <dbReference type="NCBI Taxonomy" id="291272"/>
    <lineage>
        <taxon>Bacteria</taxon>
        <taxon>Pseudomonadati</taxon>
        <taxon>Pseudomonadota</taxon>
        <taxon>Gammaproteobacteria</taxon>
        <taxon>Enterobacterales</taxon>
        <taxon>Enterobacteriaceae</taxon>
        <taxon>ant endosymbionts</taxon>
        <taxon>Candidatus Blochmanniella</taxon>
    </lineage>
</organism>
<comment type="similarity">
    <text evidence="1">Belongs to the bacterial ribosomal protein bL33 family.</text>
</comment>
<feature type="chain" id="PRO_1000004150" description="Large ribosomal subunit protein bL33">
    <location>
        <begin position="1"/>
        <end position="55"/>
    </location>
</feature>
<protein>
    <recommendedName>
        <fullName evidence="1">Large ribosomal subunit protein bL33</fullName>
    </recommendedName>
    <alternativeName>
        <fullName evidence="2">50S ribosomal protein L33</fullName>
    </alternativeName>
</protein>